<name>G3P_METST</name>
<feature type="chain" id="PRO_0000232392" description="Glyceraldehyde-3-phosphate dehydrogenase">
    <location>
        <begin position="1"/>
        <end position="337"/>
    </location>
</feature>
<feature type="region of interest" description="Disordered" evidence="2">
    <location>
        <begin position="177"/>
        <end position="196"/>
    </location>
</feature>
<feature type="active site" description="Nucleophile" evidence="1">
    <location>
        <position position="141"/>
    </location>
</feature>
<feature type="binding site" evidence="1">
    <location>
        <begin position="11"/>
        <end position="12"/>
    </location>
    <ligand>
        <name>NAD(+)</name>
        <dbReference type="ChEBI" id="CHEBI:57540"/>
    </ligand>
</feature>
<feature type="binding site" evidence="1">
    <location>
        <position position="111"/>
    </location>
    <ligand>
        <name>NAD(+)</name>
        <dbReference type="ChEBI" id="CHEBI:57540"/>
    </ligand>
</feature>
<feature type="binding site" evidence="1">
    <location>
        <begin position="140"/>
        <end position="142"/>
    </location>
    <ligand>
        <name>D-glyceraldehyde 3-phosphate</name>
        <dbReference type="ChEBI" id="CHEBI:59776"/>
    </ligand>
</feature>
<feature type="binding site" evidence="1">
    <location>
        <position position="169"/>
    </location>
    <ligand>
        <name>NAD(+)</name>
        <dbReference type="ChEBI" id="CHEBI:57540"/>
    </ligand>
</feature>
<feature type="binding site" evidence="1">
    <location>
        <begin position="194"/>
        <end position="195"/>
    </location>
    <ligand>
        <name>D-glyceraldehyde 3-phosphate</name>
        <dbReference type="ChEBI" id="CHEBI:59776"/>
    </ligand>
</feature>
<feature type="binding site" evidence="1">
    <location>
        <position position="301"/>
    </location>
    <ligand>
        <name>NAD(+)</name>
        <dbReference type="ChEBI" id="CHEBI:57540"/>
    </ligand>
</feature>
<evidence type="ECO:0000255" key="1">
    <source>
        <dbReference type="HAMAP-Rule" id="MF_00559"/>
    </source>
</evidence>
<evidence type="ECO:0000256" key="2">
    <source>
        <dbReference type="SAM" id="MobiDB-lite"/>
    </source>
</evidence>
<protein>
    <recommendedName>
        <fullName evidence="1">Glyceraldehyde-3-phosphate dehydrogenase</fullName>
        <shortName evidence="1">GAPDH</shortName>
        <ecNumber evidence="1">1.2.1.59</ecNumber>
    </recommendedName>
    <alternativeName>
        <fullName evidence="1">NAD(P)-dependent glyceraldehyde-3-phosphate dehydrogenase</fullName>
    </alternativeName>
</protein>
<organism>
    <name type="scientific">Methanosphaera stadtmanae (strain ATCC 43021 / DSM 3091 / JCM 11832 / MCB-3)</name>
    <dbReference type="NCBI Taxonomy" id="339860"/>
    <lineage>
        <taxon>Archaea</taxon>
        <taxon>Methanobacteriati</taxon>
        <taxon>Methanobacteriota</taxon>
        <taxon>Methanomada group</taxon>
        <taxon>Methanobacteria</taxon>
        <taxon>Methanobacteriales</taxon>
        <taxon>Methanobacteriaceae</taxon>
        <taxon>Methanosphaera</taxon>
    </lineage>
</organism>
<proteinExistence type="inferred from homology"/>
<accession>Q2NEN0</accession>
<dbReference type="EC" id="1.2.1.59" evidence="1"/>
<dbReference type="EMBL" id="CP000102">
    <property type="protein sequence ID" value="ABC57723.1"/>
    <property type="molecule type" value="Genomic_DNA"/>
</dbReference>
<dbReference type="RefSeq" id="WP_011406922.1">
    <property type="nucleotide sequence ID" value="NC_007681.1"/>
</dbReference>
<dbReference type="SMR" id="Q2NEN0"/>
<dbReference type="STRING" id="339860.Msp_1346"/>
<dbReference type="KEGG" id="mst:Msp_1346"/>
<dbReference type="eggNOG" id="arCOG00493">
    <property type="taxonomic scope" value="Archaea"/>
</dbReference>
<dbReference type="HOGENOM" id="CLU_069533_0_0_2"/>
<dbReference type="OrthoDB" id="295712at2157"/>
<dbReference type="UniPathway" id="UPA00109">
    <property type="reaction ID" value="UER00184"/>
</dbReference>
<dbReference type="Proteomes" id="UP000001931">
    <property type="component" value="Chromosome"/>
</dbReference>
<dbReference type="GO" id="GO:0005737">
    <property type="term" value="C:cytoplasm"/>
    <property type="evidence" value="ECO:0007669"/>
    <property type="project" value="UniProtKB-SubCell"/>
</dbReference>
<dbReference type="GO" id="GO:0004365">
    <property type="term" value="F:glyceraldehyde-3-phosphate dehydrogenase (NAD+) (phosphorylating) activity"/>
    <property type="evidence" value="ECO:0007669"/>
    <property type="project" value="UniProtKB-UniRule"/>
</dbReference>
<dbReference type="GO" id="GO:0047100">
    <property type="term" value="F:glyceraldehyde-3-phosphate dehydrogenase (NADP+) (phosphorylating) activity"/>
    <property type="evidence" value="ECO:0007669"/>
    <property type="project" value="RHEA"/>
</dbReference>
<dbReference type="GO" id="GO:0051287">
    <property type="term" value="F:NAD binding"/>
    <property type="evidence" value="ECO:0007669"/>
    <property type="project" value="InterPro"/>
</dbReference>
<dbReference type="GO" id="GO:0050661">
    <property type="term" value="F:NADP binding"/>
    <property type="evidence" value="ECO:0007669"/>
    <property type="project" value="InterPro"/>
</dbReference>
<dbReference type="GO" id="GO:0006096">
    <property type="term" value="P:glycolytic process"/>
    <property type="evidence" value="ECO:0007669"/>
    <property type="project" value="UniProtKB-UniRule"/>
</dbReference>
<dbReference type="CDD" id="cd18127">
    <property type="entry name" value="GAPDH_II_C"/>
    <property type="match status" value="1"/>
</dbReference>
<dbReference type="CDD" id="cd02278">
    <property type="entry name" value="GAPDH_II_N"/>
    <property type="match status" value="1"/>
</dbReference>
<dbReference type="Gene3D" id="3.30.360.10">
    <property type="entry name" value="Dihydrodipicolinate Reductase, domain 2"/>
    <property type="match status" value="1"/>
</dbReference>
<dbReference type="Gene3D" id="3.40.50.720">
    <property type="entry name" value="NAD(P)-binding Rossmann-like Domain"/>
    <property type="match status" value="1"/>
</dbReference>
<dbReference type="HAMAP" id="MF_00559">
    <property type="entry name" value="G3P_dehdrog_arch"/>
    <property type="match status" value="1"/>
</dbReference>
<dbReference type="InterPro" id="IPR020831">
    <property type="entry name" value="GlycerAld/Erythrose_P_DH"/>
</dbReference>
<dbReference type="InterPro" id="IPR020830">
    <property type="entry name" value="GlycerAld_3-P_DH_AS"/>
</dbReference>
<dbReference type="InterPro" id="IPR020829">
    <property type="entry name" value="GlycerAld_3-P_DH_cat"/>
</dbReference>
<dbReference type="InterPro" id="IPR020828">
    <property type="entry name" value="GlycerAld_3-P_DH_NAD(P)-bd"/>
</dbReference>
<dbReference type="InterPro" id="IPR006436">
    <property type="entry name" value="Glyceraldehyde-3-P_DH_2_arc"/>
</dbReference>
<dbReference type="InterPro" id="IPR036291">
    <property type="entry name" value="NAD(P)-bd_dom_sf"/>
</dbReference>
<dbReference type="NCBIfam" id="TIGR01546">
    <property type="entry name" value="GAPDH-II_archae"/>
    <property type="match status" value="1"/>
</dbReference>
<dbReference type="NCBIfam" id="NF003251">
    <property type="entry name" value="PRK04207.1"/>
    <property type="match status" value="1"/>
</dbReference>
<dbReference type="Pfam" id="PF02800">
    <property type="entry name" value="Gp_dh_C"/>
    <property type="match status" value="1"/>
</dbReference>
<dbReference type="PIRSF" id="PIRSF000149">
    <property type="entry name" value="GAP_DH"/>
    <property type="match status" value="1"/>
</dbReference>
<dbReference type="SMART" id="SM00846">
    <property type="entry name" value="Gp_dh_N"/>
    <property type="match status" value="1"/>
</dbReference>
<dbReference type="SUPFAM" id="SSF55347">
    <property type="entry name" value="Glyceraldehyde-3-phosphate dehydrogenase-like, C-terminal domain"/>
    <property type="match status" value="1"/>
</dbReference>
<dbReference type="SUPFAM" id="SSF51735">
    <property type="entry name" value="NAD(P)-binding Rossmann-fold domains"/>
    <property type="match status" value="1"/>
</dbReference>
<dbReference type="PROSITE" id="PS00071">
    <property type="entry name" value="GAPDH"/>
    <property type="match status" value="1"/>
</dbReference>
<reference key="1">
    <citation type="journal article" date="2006" name="J. Bacteriol.">
        <title>The genome sequence of Methanosphaera stadtmanae reveals why this human intestinal archaeon is restricted to methanol and H2 for methane formation and ATP synthesis.</title>
        <authorList>
            <person name="Fricke W.F."/>
            <person name="Seedorf H."/>
            <person name="Henne A."/>
            <person name="Kruer M."/>
            <person name="Liesegang H."/>
            <person name="Hedderich R."/>
            <person name="Gottschalk G."/>
            <person name="Thauer R.K."/>
        </authorList>
    </citation>
    <scope>NUCLEOTIDE SEQUENCE [LARGE SCALE GENOMIC DNA]</scope>
    <source>
        <strain>ATCC 43021 / DSM 3091 / JCM 11832 / MCB-3</strain>
    </source>
</reference>
<keyword id="KW-0963">Cytoplasm</keyword>
<keyword id="KW-0324">Glycolysis</keyword>
<keyword id="KW-0520">NAD</keyword>
<keyword id="KW-0521">NADP</keyword>
<keyword id="KW-0560">Oxidoreductase</keyword>
<keyword id="KW-1185">Reference proteome</keyword>
<sequence length="337" mass="36910">MKSIGINGYGTIGKRVADAVSAQDDMKIVGVTKRTPDYEAKAAVEKGYDLYISVPERESQFEEAGIEVAGTADELFEKLDLVVDCTPGGIGAQNKTDIYEKIGLKAIFEGGEDHDAIGSSFNAEANYADNIGEDYVRVVSCNTTGLCRTLKPIYDISGIKKVRAVMVRRGADPSDVKKGPINSIVPTTEVPSHHGPDVQTIIDDINVMTMALLVPTTLMHTHNIMVELEDKITTDDVLDAFENAHRVLPVQKSLKLGSTAEIMEYAKDLGRSRGDMYEIPVWKESVNIENGELFYMQAVHQESDVVPENVDAIRAMLELEEDGEKSILKTNKAMGIL</sequence>
<comment type="catalytic activity">
    <reaction evidence="1">
        <text>D-glyceraldehyde 3-phosphate + phosphate + NADP(+) = (2R)-3-phospho-glyceroyl phosphate + NADPH + H(+)</text>
        <dbReference type="Rhea" id="RHEA:10296"/>
        <dbReference type="ChEBI" id="CHEBI:15378"/>
        <dbReference type="ChEBI" id="CHEBI:43474"/>
        <dbReference type="ChEBI" id="CHEBI:57604"/>
        <dbReference type="ChEBI" id="CHEBI:57783"/>
        <dbReference type="ChEBI" id="CHEBI:58349"/>
        <dbReference type="ChEBI" id="CHEBI:59776"/>
        <dbReference type="EC" id="1.2.1.59"/>
    </reaction>
</comment>
<comment type="catalytic activity">
    <reaction evidence="1">
        <text>D-glyceraldehyde 3-phosphate + phosphate + NAD(+) = (2R)-3-phospho-glyceroyl phosphate + NADH + H(+)</text>
        <dbReference type="Rhea" id="RHEA:10300"/>
        <dbReference type="ChEBI" id="CHEBI:15378"/>
        <dbReference type="ChEBI" id="CHEBI:43474"/>
        <dbReference type="ChEBI" id="CHEBI:57540"/>
        <dbReference type="ChEBI" id="CHEBI:57604"/>
        <dbReference type="ChEBI" id="CHEBI:57945"/>
        <dbReference type="ChEBI" id="CHEBI:59776"/>
        <dbReference type="EC" id="1.2.1.59"/>
    </reaction>
</comment>
<comment type="pathway">
    <text evidence="1">Carbohydrate degradation; glycolysis; pyruvate from D-glyceraldehyde 3-phosphate: step 1/5.</text>
</comment>
<comment type="subunit">
    <text evidence="1">Homotetramer.</text>
</comment>
<comment type="subcellular location">
    <subcellularLocation>
        <location evidence="1">Cytoplasm</location>
    </subcellularLocation>
</comment>
<comment type="similarity">
    <text evidence="1">Belongs to the glyceraldehyde-3-phosphate dehydrogenase family.</text>
</comment>
<gene>
    <name evidence="1" type="primary">gap</name>
    <name type="ordered locus">Msp_1346</name>
</gene>